<comment type="function">
    <text evidence="1">Produces ATP from ADP in the presence of a proton gradient across the membrane. The catalytic sites are hosted primarily by the beta subunits.</text>
</comment>
<comment type="catalytic activity">
    <reaction evidence="1">
        <text>ATP + H2O + 4 H(+)(in) = ADP + phosphate + 5 H(+)(out)</text>
        <dbReference type="Rhea" id="RHEA:57720"/>
        <dbReference type="ChEBI" id="CHEBI:15377"/>
        <dbReference type="ChEBI" id="CHEBI:15378"/>
        <dbReference type="ChEBI" id="CHEBI:30616"/>
        <dbReference type="ChEBI" id="CHEBI:43474"/>
        <dbReference type="ChEBI" id="CHEBI:456216"/>
        <dbReference type="EC" id="7.1.2.2"/>
    </reaction>
</comment>
<comment type="subunit">
    <text evidence="1">F-type ATPases have 2 components, CF(1) - the catalytic core - and CF(0) - the membrane proton channel. CF(1) has five subunits: alpha(3), beta(3), gamma(1), delta(1), epsilon(1). CF(0) has three main subunits: a(1), b(2) and c(9-12). The alpha and beta chains form an alternating ring which encloses part of the gamma chain. CF(1) is attached to CF(0) by a central stalk formed by the gamma and epsilon chains, while a peripheral stalk is formed by the delta and b chains.</text>
</comment>
<comment type="subcellular location">
    <subcellularLocation>
        <location evidence="1">Cell membrane</location>
        <topology evidence="1">Peripheral membrane protein</topology>
    </subcellularLocation>
</comment>
<comment type="similarity">
    <text evidence="1">Belongs to the ATPase alpha/beta chains family.</text>
</comment>
<reference key="1">
    <citation type="submission" date="2007-05" db="EMBL/GenBank/DDBJ databases">
        <title>Complete sequence of Dehalococcoides sp. BAV1.</title>
        <authorList>
            <consortium name="US DOE Joint Genome Institute"/>
            <person name="Copeland A."/>
            <person name="Lucas S."/>
            <person name="Lapidus A."/>
            <person name="Barry K."/>
            <person name="Detter J.C."/>
            <person name="Glavina del Rio T."/>
            <person name="Hammon N."/>
            <person name="Israni S."/>
            <person name="Pitluck S."/>
            <person name="Lowry S."/>
            <person name="Clum A."/>
            <person name="Schmutz J."/>
            <person name="Larimer F."/>
            <person name="Land M."/>
            <person name="Hauser L."/>
            <person name="Kyrpides N."/>
            <person name="Kim E."/>
            <person name="Ritalahti K.M."/>
            <person name="Loeffler F."/>
            <person name="Richardson P."/>
        </authorList>
    </citation>
    <scope>NUCLEOTIDE SEQUENCE [LARGE SCALE GENOMIC DNA]</scope>
    <source>
        <strain>ATCC BAA-2100 / JCM 16839 / KCTC 5957 / BAV1</strain>
    </source>
</reference>
<evidence type="ECO:0000255" key="1">
    <source>
        <dbReference type="HAMAP-Rule" id="MF_01347"/>
    </source>
</evidence>
<feature type="chain" id="PRO_1000086909" description="ATP synthase subunit beta">
    <location>
        <begin position="1"/>
        <end position="464"/>
    </location>
</feature>
<feature type="binding site" evidence="1">
    <location>
        <begin position="150"/>
        <end position="157"/>
    </location>
    <ligand>
        <name>ATP</name>
        <dbReference type="ChEBI" id="CHEBI:30616"/>
    </ligand>
</feature>
<gene>
    <name evidence="1" type="primary">atpD</name>
    <name type="ordered locus">DehaBAV1_0538</name>
</gene>
<name>ATPB_DEHMB</name>
<sequence length="464" mass="50729">MANGKVIQVIGSVVDVEFSADSMPALFNALEIPRENGKMVLEVQSHVGNNRVKCLSFTPTDGLERGAEVIDTTRPLSVPVGRGTLGRIFNVLGEALDNRGDVKSEKTMPIHRLAPGMDELESSAQVLETGIKVIDLIAPFARGGKIGALGGAGVGKTVLIQELIRNIATEHEGFSVFAGVGERSREGNDLWHEMEDSGVLPKTTMVFGQMNELPAVRLRIALTGLTMAEYFRDEERQDVLLFIDNIYRYTLAGMEVSALLGRMPSAVGYQPTLATEMGALQERIASTKQGSITSFQAVYVPADDYTDPGVVATFGHLDAMIALERSLAEQALYPAVDPLASNSRILDPQVVGEEHYKVARDVQKVLQRYKDLQDVIAILGMEELSEEDKLTVARARRIQRFLTQPMFVSEVFTGRPGQYVSLTETIRGFKEILEGKHDSLPEQAFYMVGTIDDAVAEAKKLSAV</sequence>
<keyword id="KW-0066">ATP synthesis</keyword>
<keyword id="KW-0067">ATP-binding</keyword>
<keyword id="KW-1003">Cell membrane</keyword>
<keyword id="KW-0139">CF(1)</keyword>
<keyword id="KW-0375">Hydrogen ion transport</keyword>
<keyword id="KW-0406">Ion transport</keyword>
<keyword id="KW-0472">Membrane</keyword>
<keyword id="KW-0547">Nucleotide-binding</keyword>
<keyword id="KW-1278">Translocase</keyword>
<keyword id="KW-0813">Transport</keyword>
<accession>A5FRQ5</accession>
<organism>
    <name type="scientific">Dehalococcoides mccartyi (strain ATCC BAA-2100 / JCM 16839 / KCTC 5957 / BAV1)</name>
    <dbReference type="NCBI Taxonomy" id="216389"/>
    <lineage>
        <taxon>Bacteria</taxon>
        <taxon>Bacillati</taxon>
        <taxon>Chloroflexota</taxon>
        <taxon>Dehalococcoidia</taxon>
        <taxon>Dehalococcoidales</taxon>
        <taxon>Dehalococcoidaceae</taxon>
        <taxon>Dehalococcoides</taxon>
    </lineage>
</organism>
<proteinExistence type="inferred from homology"/>
<protein>
    <recommendedName>
        <fullName evidence="1">ATP synthase subunit beta</fullName>
        <ecNumber evidence="1">7.1.2.2</ecNumber>
    </recommendedName>
    <alternativeName>
        <fullName evidence="1">ATP synthase F1 sector subunit beta</fullName>
    </alternativeName>
    <alternativeName>
        <fullName evidence="1">F-ATPase subunit beta</fullName>
    </alternativeName>
</protein>
<dbReference type="EC" id="7.1.2.2" evidence="1"/>
<dbReference type="EMBL" id="CP000688">
    <property type="protein sequence ID" value="ABQ17123.1"/>
    <property type="molecule type" value="Genomic_DNA"/>
</dbReference>
<dbReference type="SMR" id="A5FRQ5"/>
<dbReference type="KEGG" id="deb:DehaBAV1_0538"/>
<dbReference type="PATRIC" id="fig|216389.18.peg.583"/>
<dbReference type="HOGENOM" id="CLU_022398_0_2_0"/>
<dbReference type="GO" id="GO:0005886">
    <property type="term" value="C:plasma membrane"/>
    <property type="evidence" value="ECO:0007669"/>
    <property type="project" value="UniProtKB-SubCell"/>
</dbReference>
<dbReference type="GO" id="GO:0045259">
    <property type="term" value="C:proton-transporting ATP synthase complex"/>
    <property type="evidence" value="ECO:0007669"/>
    <property type="project" value="UniProtKB-KW"/>
</dbReference>
<dbReference type="GO" id="GO:0005524">
    <property type="term" value="F:ATP binding"/>
    <property type="evidence" value="ECO:0007669"/>
    <property type="project" value="UniProtKB-UniRule"/>
</dbReference>
<dbReference type="GO" id="GO:0016887">
    <property type="term" value="F:ATP hydrolysis activity"/>
    <property type="evidence" value="ECO:0007669"/>
    <property type="project" value="InterPro"/>
</dbReference>
<dbReference type="GO" id="GO:0046933">
    <property type="term" value="F:proton-transporting ATP synthase activity, rotational mechanism"/>
    <property type="evidence" value="ECO:0007669"/>
    <property type="project" value="UniProtKB-UniRule"/>
</dbReference>
<dbReference type="CDD" id="cd18110">
    <property type="entry name" value="ATP-synt_F1_beta_C"/>
    <property type="match status" value="1"/>
</dbReference>
<dbReference type="CDD" id="cd18115">
    <property type="entry name" value="ATP-synt_F1_beta_N"/>
    <property type="match status" value="1"/>
</dbReference>
<dbReference type="CDD" id="cd01133">
    <property type="entry name" value="F1-ATPase_beta_CD"/>
    <property type="match status" value="1"/>
</dbReference>
<dbReference type="FunFam" id="1.10.1140.10:FF:000001">
    <property type="entry name" value="ATP synthase subunit beta"/>
    <property type="match status" value="1"/>
</dbReference>
<dbReference type="FunFam" id="3.40.50.300:FF:001630">
    <property type="entry name" value="ATP synthase subunit beta"/>
    <property type="match status" value="1"/>
</dbReference>
<dbReference type="Gene3D" id="2.40.10.170">
    <property type="match status" value="1"/>
</dbReference>
<dbReference type="Gene3D" id="1.10.1140.10">
    <property type="entry name" value="Bovine Mitochondrial F1-atpase, Atp Synthase Beta Chain, Chain D, domain 3"/>
    <property type="match status" value="1"/>
</dbReference>
<dbReference type="Gene3D" id="3.40.50.300">
    <property type="entry name" value="P-loop containing nucleotide triphosphate hydrolases"/>
    <property type="match status" value="1"/>
</dbReference>
<dbReference type="HAMAP" id="MF_01347">
    <property type="entry name" value="ATP_synth_beta_bact"/>
    <property type="match status" value="1"/>
</dbReference>
<dbReference type="InterPro" id="IPR003593">
    <property type="entry name" value="AAA+_ATPase"/>
</dbReference>
<dbReference type="InterPro" id="IPR055190">
    <property type="entry name" value="ATP-synt_VA_C"/>
</dbReference>
<dbReference type="InterPro" id="IPR005722">
    <property type="entry name" value="ATP_synth_F1_bsu"/>
</dbReference>
<dbReference type="InterPro" id="IPR020003">
    <property type="entry name" value="ATPase_a/bsu_AS"/>
</dbReference>
<dbReference type="InterPro" id="IPR050053">
    <property type="entry name" value="ATPase_alpha/beta_chains"/>
</dbReference>
<dbReference type="InterPro" id="IPR004100">
    <property type="entry name" value="ATPase_F1/V1/A1_a/bsu_N"/>
</dbReference>
<dbReference type="InterPro" id="IPR036121">
    <property type="entry name" value="ATPase_F1/V1/A1_a/bsu_N_sf"/>
</dbReference>
<dbReference type="InterPro" id="IPR000194">
    <property type="entry name" value="ATPase_F1/V1/A1_a/bsu_nucl-bd"/>
</dbReference>
<dbReference type="InterPro" id="IPR024034">
    <property type="entry name" value="ATPase_F1/V1_b/a_C"/>
</dbReference>
<dbReference type="InterPro" id="IPR027417">
    <property type="entry name" value="P-loop_NTPase"/>
</dbReference>
<dbReference type="NCBIfam" id="TIGR01039">
    <property type="entry name" value="atpD"/>
    <property type="match status" value="1"/>
</dbReference>
<dbReference type="PANTHER" id="PTHR15184">
    <property type="entry name" value="ATP SYNTHASE"/>
    <property type="match status" value="1"/>
</dbReference>
<dbReference type="PANTHER" id="PTHR15184:SF71">
    <property type="entry name" value="ATP SYNTHASE SUBUNIT BETA, MITOCHONDRIAL"/>
    <property type="match status" value="1"/>
</dbReference>
<dbReference type="Pfam" id="PF00006">
    <property type="entry name" value="ATP-synt_ab"/>
    <property type="match status" value="1"/>
</dbReference>
<dbReference type="Pfam" id="PF02874">
    <property type="entry name" value="ATP-synt_ab_N"/>
    <property type="match status" value="1"/>
</dbReference>
<dbReference type="Pfam" id="PF22919">
    <property type="entry name" value="ATP-synt_VA_C"/>
    <property type="match status" value="1"/>
</dbReference>
<dbReference type="SMART" id="SM00382">
    <property type="entry name" value="AAA"/>
    <property type="match status" value="1"/>
</dbReference>
<dbReference type="SUPFAM" id="SSF47917">
    <property type="entry name" value="C-terminal domain of alpha and beta subunits of F1 ATP synthase"/>
    <property type="match status" value="1"/>
</dbReference>
<dbReference type="SUPFAM" id="SSF50615">
    <property type="entry name" value="N-terminal domain of alpha and beta subunits of F1 ATP synthase"/>
    <property type="match status" value="1"/>
</dbReference>
<dbReference type="SUPFAM" id="SSF52540">
    <property type="entry name" value="P-loop containing nucleoside triphosphate hydrolases"/>
    <property type="match status" value="1"/>
</dbReference>
<dbReference type="PROSITE" id="PS00152">
    <property type="entry name" value="ATPASE_ALPHA_BETA"/>
    <property type="match status" value="1"/>
</dbReference>